<organism>
    <name type="scientific">Conus betulinus</name>
    <name type="common">Beech cone</name>
    <dbReference type="NCBI Taxonomy" id="89764"/>
    <lineage>
        <taxon>Eukaryota</taxon>
        <taxon>Metazoa</taxon>
        <taxon>Spiralia</taxon>
        <taxon>Lophotrochozoa</taxon>
        <taxon>Mollusca</taxon>
        <taxon>Gastropoda</taxon>
        <taxon>Caenogastropoda</taxon>
        <taxon>Neogastropoda</taxon>
        <taxon>Conoidea</taxon>
        <taxon>Conidae</taxon>
        <taxon>Conus</taxon>
        <taxon>Dendroconus</taxon>
    </lineage>
</organism>
<sequence>GCGGVCAYGESCPSSCNTCYSAQCTAQ</sequence>
<evidence type="ECO:0000250" key="1">
    <source>
        <dbReference type="UniProtKB" id="Q9GU57"/>
    </source>
</evidence>
<evidence type="ECO:0000269" key="2">
    <source>
    </source>
</evidence>
<evidence type="ECO:0000303" key="3">
    <source>
    </source>
</evidence>
<evidence type="ECO:0000305" key="4"/>
<evidence type="ECO:0000305" key="5">
    <source>
    </source>
</evidence>
<proteinExistence type="evidence at protein level"/>
<feature type="peptide" id="PRO_0000044490" description="Conotoxin Bt9.2" evidence="2">
    <location>
        <begin position="1"/>
        <end position="27"/>
    </location>
</feature>
<feature type="modified residue" description="4-hydroxyproline" evidence="2">
    <location>
        <position position="13"/>
    </location>
</feature>
<feature type="disulfide bond" evidence="1">
    <location>
        <begin position="2"/>
        <end position="16"/>
    </location>
</feature>
<feature type="disulfide bond" evidence="1">
    <location>
        <begin position="6"/>
        <end position="19"/>
    </location>
</feature>
<feature type="disulfide bond" evidence="1">
    <location>
        <begin position="12"/>
        <end position="24"/>
    </location>
</feature>
<protein>
    <recommendedName>
        <fullName evidence="4">Conotoxin Bt9.2</fullName>
    </recommendedName>
    <alternativeName>
        <fullName evidence="3">Conotoxin BeTXIIb</fullName>
    </alternativeName>
</protein>
<keyword id="KW-0903">Direct protein sequencing</keyword>
<keyword id="KW-1015">Disulfide bond</keyword>
<keyword id="KW-0379">Hydroxylation</keyword>
<keyword id="KW-0872">Ion channel impairing toxin</keyword>
<keyword id="KW-0528">Neurotoxin</keyword>
<keyword id="KW-0964">Secreted</keyword>
<keyword id="KW-0800">Toxin</keyword>
<comment type="function">
    <text evidence="4">Probable neurotoxin that inhibits ion channels.</text>
</comment>
<comment type="subcellular location">
    <subcellularLocation>
        <location evidence="2">Secreted</location>
    </subcellularLocation>
</comment>
<comment type="tissue specificity">
    <text evidence="5">Expressed by the venom duct.</text>
</comment>
<comment type="domain">
    <text evidence="4">The cysteine framework is IX (C-C-C-C-C-C).</text>
</comment>
<comment type="mass spectrometry"/>
<comment type="similarity">
    <text evidence="4">Belongs to the conotoxin P superfamily.</text>
</comment>
<accession>P81727</accession>
<reference key="1">
    <citation type="journal article" date="1999" name="J. Nat. Toxins">
        <title>Studies on conotoxins of Conus betulinus.</title>
        <authorList>
            <person name="Chen J.-S."/>
            <person name="Fan C.-X."/>
            <person name="Hu K.-P."/>
            <person name="Wei K.-H."/>
            <person name="Zhong M.-N."/>
        </authorList>
    </citation>
    <scope>PROTEIN SEQUENCE</scope>
    <scope>MASS SPECTROMETRY</scope>
    <scope>HYDROXYLATION AT PRO-13</scope>
    <scope>SUBCELLULAR LOCATION</scope>
    <source>
        <tissue>Venom</tissue>
    </source>
</reference>
<dbReference type="ConoServer" id="1515">
    <property type="toxin name" value="BeTXIIb"/>
</dbReference>
<dbReference type="GO" id="GO:0005576">
    <property type="term" value="C:extracellular region"/>
    <property type="evidence" value="ECO:0007669"/>
    <property type="project" value="UniProtKB-SubCell"/>
</dbReference>
<dbReference type="GO" id="GO:0099106">
    <property type="term" value="F:ion channel regulator activity"/>
    <property type="evidence" value="ECO:0007669"/>
    <property type="project" value="UniProtKB-KW"/>
</dbReference>
<dbReference type="GO" id="GO:0090729">
    <property type="term" value="F:toxin activity"/>
    <property type="evidence" value="ECO:0007669"/>
    <property type="project" value="UniProtKB-KW"/>
</dbReference>
<name>CP92_CONBE</name>